<feature type="initiator methionine" description="Removed" evidence="1">
    <location>
        <position position="1"/>
    </location>
</feature>
<feature type="chain" id="PRO_0000228415" description="Formamidopyrimidine-DNA glycosylase">
    <location>
        <begin position="2"/>
        <end position="276"/>
    </location>
</feature>
<feature type="zinc finger region" description="FPG-type" evidence="2">
    <location>
        <begin position="240"/>
        <end position="274"/>
    </location>
</feature>
<feature type="active site" description="Schiff-base intermediate with DNA" evidence="2">
    <location>
        <position position="2"/>
    </location>
</feature>
<feature type="active site" description="Proton donor" evidence="2">
    <location>
        <position position="3"/>
    </location>
</feature>
<feature type="active site" description="Proton donor; for beta-elimination activity" evidence="2">
    <location>
        <position position="60"/>
    </location>
</feature>
<feature type="active site" description="Proton donor; for delta-elimination activity" evidence="2">
    <location>
        <position position="264"/>
    </location>
</feature>
<feature type="binding site" evidence="2">
    <location>
        <position position="93"/>
    </location>
    <ligand>
        <name>DNA</name>
        <dbReference type="ChEBI" id="CHEBI:16991"/>
    </ligand>
</feature>
<feature type="binding site" evidence="2">
    <location>
        <position position="112"/>
    </location>
    <ligand>
        <name>DNA</name>
        <dbReference type="ChEBI" id="CHEBI:16991"/>
    </ligand>
</feature>
<proteinExistence type="inferred from homology"/>
<dbReference type="EC" id="3.2.2.23" evidence="2"/>
<dbReference type="EC" id="4.2.99.18" evidence="2"/>
<dbReference type="EMBL" id="AE017355">
    <property type="protein sequence ID" value="AAT63543.1"/>
    <property type="molecule type" value="Genomic_DNA"/>
</dbReference>
<dbReference type="RefSeq" id="WP_001114480.1">
    <property type="nucleotide sequence ID" value="NC_005957.1"/>
</dbReference>
<dbReference type="RefSeq" id="YP_038631.1">
    <property type="nucleotide sequence ID" value="NC_005957.1"/>
</dbReference>
<dbReference type="SMR" id="Q6HCU5"/>
<dbReference type="GeneID" id="45024458"/>
<dbReference type="KEGG" id="btk:BT9727_4316"/>
<dbReference type="PATRIC" id="fig|281309.8.peg.4600"/>
<dbReference type="HOGENOM" id="CLU_038423_1_3_9"/>
<dbReference type="Proteomes" id="UP000001301">
    <property type="component" value="Chromosome"/>
</dbReference>
<dbReference type="GO" id="GO:0034039">
    <property type="term" value="F:8-oxo-7,8-dihydroguanine DNA N-glycosylase activity"/>
    <property type="evidence" value="ECO:0007669"/>
    <property type="project" value="TreeGrafter"/>
</dbReference>
<dbReference type="GO" id="GO:0140078">
    <property type="term" value="F:class I DNA-(apurinic or apyrimidinic site) endonuclease activity"/>
    <property type="evidence" value="ECO:0007669"/>
    <property type="project" value="UniProtKB-EC"/>
</dbReference>
<dbReference type="GO" id="GO:0003684">
    <property type="term" value="F:damaged DNA binding"/>
    <property type="evidence" value="ECO:0007669"/>
    <property type="project" value="InterPro"/>
</dbReference>
<dbReference type="GO" id="GO:0008270">
    <property type="term" value="F:zinc ion binding"/>
    <property type="evidence" value="ECO:0007669"/>
    <property type="project" value="UniProtKB-UniRule"/>
</dbReference>
<dbReference type="GO" id="GO:0006284">
    <property type="term" value="P:base-excision repair"/>
    <property type="evidence" value="ECO:0007669"/>
    <property type="project" value="InterPro"/>
</dbReference>
<dbReference type="CDD" id="cd08966">
    <property type="entry name" value="EcFpg-like_N"/>
    <property type="match status" value="1"/>
</dbReference>
<dbReference type="FunFam" id="1.10.8.50:FF:000003">
    <property type="entry name" value="Formamidopyrimidine-DNA glycosylase"/>
    <property type="match status" value="1"/>
</dbReference>
<dbReference type="FunFam" id="3.20.190.10:FF:000001">
    <property type="entry name" value="Formamidopyrimidine-DNA glycosylase"/>
    <property type="match status" value="1"/>
</dbReference>
<dbReference type="Gene3D" id="1.10.8.50">
    <property type="match status" value="1"/>
</dbReference>
<dbReference type="Gene3D" id="3.20.190.10">
    <property type="entry name" value="MutM-like, N-terminal"/>
    <property type="match status" value="1"/>
</dbReference>
<dbReference type="HAMAP" id="MF_00103">
    <property type="entry name" value="Fapy_DNA_glycosyl"/>
    <property type="match status" value="1"/>
</dbReference>
<dbReference type="InterPro" id="IPR015886">
    <property type="entry name" value="DNA_glyclase/AP_lyase_DNA-bd"/>
</dbReference>
<dbReference type="InterPro" id="IPR015887">
    <property type="entry name" value="DNA_glyclase_Znf_dom_DNA_BS"/>
</dbReference>
<dbReference type="InterPro" id="IPR020629">
    <property type="entry name" value="Formamido-pyr_DNA_Glyclase"/>
</dbReference>
<dbReference type="InterPro" id="IPR012319">
    <property type="entry name" value="FPG_cat"/>
</dbReference>
<dbReference type="InterPro" id="IPR035937">
    <property type="entry name" value="MutM-like_N-ter"/>
</dbReference>
<dbReference type="InterPro" id="IPR010979">
    <property type="entry name" value="Ribosomal_uS13-like_H2TH"/>
</dbReference>
<dbReference type="InterPro" id="IPR000214">
    <property type="entry name" value="Znf_DNA_glyclase/AP_lyase"/>
</dbReference>
<dbReference type="InterPro" id="IPR010663">
    <property type="entry name" value="Znf_FPG/IleRS"/>
</dbReference>
<dbReference type="NCBIfam" id="TIGR00577">
    <property type="entry name" value="fpg"/>
    <property type="match status" value="1"/>
</dbReference>
<dbReference type="NCBIfam" id="NF002211">
    <property type="entry name" value="PRK01103.1"/>
    <property type="match status" value="1"/>
</dbReference>
<dbReference type="PANTHER" id="PTHR22993">
    <property type="entry name" value="FORMAMIDOPYRIMIDINE-DNA GLYCOSYLASE"/>
    <property type="match status" value="1"/>
</dbReference>
<dbReference type="PANTHER" id="PTHR22993:SF9">
    <property type="entry name" value="FORMAMIDOPYRIMIDINE-DNA GLYCOSYLASE"/>
    <property type="match status" value="1"/>
</dbReference>
<dbReference type="Pfam" id="PF01149">
    <property type="entry name" value="Fapy_DNA_glyco"/>
    <property type="match status" value="1"/>
</dbReference>
<dbReference type="Pfam" id="PF06831">
    <property type="entry name" value="H2TH"/>
    <property type="match status" value="1"/>
</dbReference>
<dbReference type="Pfam" id="PF06827">
    <property type="entry name" value="zf-FPG_IleRS"/>
    <property type="match status" value="1"/>
</dbReference>
<dbReference type="SMART" id="SM00898">
    <property type="entry name" value="Fapy_DNA_glyco"/>
    <property type="match status" value="1"/>
</dbReference>
<dbReference type="SMART" id="SM01232">
    <property type="entry name" value="H2TH"/>
    <property type="match status" value="1"/>
</dbReference>
<dbReference type="SUPFAM" id="SSF57716">
    <property type="entry name" value="Glucocorticoid receptor-like (DNA-binding domain)"/>
    <property type="match status" value="1"/>
</dbReference>
<dbReference type="SUPFAM" id="SSF81624">
    <property type="entry name" value="N-terminal domain of MutM-like DNA repair proteins"/>
    <property type="match status" value="1"/>
</dbReference>
<dbReference type="SUPFAM" id="SSF46946">
    <property type="entry name" value="S13-like H2TH domain"/>
    <property type="match status" value="1"/>
</dbReference>
<dbReference type="PROSITE" id="PS51068">
    <property type="entry name" value="FPG_CAT"/>
    <property type="match status" value="1"/>
</dbReference>
<dbReference type="PROSITE" id="PS01242">
    <property type="entry name" value="ZF_FPG_1"/>
    <property type="match status" value="1"/>
</dbReference>
<dbReference type="PROSITE" id="PS51066">
    <property type="entry name" value="ZF_FPG_2"/>
    <property type="match status" value="1"/>
</dbReference>
<protein>
    <recommendedName>
        <fullName evidence="2">Formamidopyrimidine-DNA glycosylase</fullName>
        <shortName evidence="2">Fapy-DNA glycosylase</shortName>
        <ecNumber evidence="2">3.2.2.23</ecNumber>
    </recommendedName>
    <alternativeName>
        <fullName evidence="2">DNA-(apurinic or apyrimidinic site) lyase MutM</fullName>
        <shortName evidence="2">AP lyase MutM</shortName>
        <ecNumber evidence="2">4.2.99.18</ecNumber>
    </alternativeName>
</protein>
<evidence type="ECO:0000250" key="1"/>
<evidence type="ECO:0000255" key="2">
    <source>
        <dbReference type="HAMAP-Rule" id="MF_00103"/>
    </source>
</evidence>
<gene>
    <name evidence="2" type="primary">mutM</name>
    <name evidence="2" type="synonym">fpg</name>
    <name type="ordered locus">BT9727_4316</name>
</gene>
<accession>Q6HCU5</accession>
<comment type="function">
    <text evidence="2">Involved in base excision repair of DNA damaged by oxidation or by mutagenic agents. Acts as a DNA glycosylase that recognizes and removes damaged bases. Has a preference for oxidized purines, such as 7,8-dihydro-8-oxoguanine (8-oxoG). Has AP (apurinic/apyrimidinic) lyase activity and introduces nicks in the DNA strand. Cleaves the DNA backbone by beta-delta elimination to generate a single-strand break at the site of the removed base with both 3'- and 5'-phosphates.</text>
</comment>
<comment type="catalytic activity">
    <reaction evidence="2">
        <text>Hydrolysis of DNA containing ring-opened 7-methylguanine residues, releasing 2,6-diamino-4-hydroxy-5-(N-methyl)formamidopyrimidine.</text>
        <dbReference type="EC" id="3.2.2.23"/>
    </reaction>
</comment>
<comment type="catalytic activity">
    <reaction evidence="2">
        <text>2'-deoxyribonucleotide-(2'-deoxyribose 5'-phosphate)-2'-deoxyribonucleotide-DNA = a 3'-end 2'-deoxyribonucleotide-(2,3-dehydro-2,3-deoxyribose 5'-phosphate)-DNA + a 5'-end 5'-phospho-2'-deoxyribonucleoside-DNA + H(+)</text>
        <dbReference type="Rhea" id="RHEA:66592"/>
        <dbReference type="Rhea" id="RHEA-COMP:13180"/>
        <dbReference type="Rhea" id="RHEA-COMP:16897"/>
        <dbReference type="Rhea" id="RHEA-COMP:17067"/>
        <dbReference type="ChEBI" id="CHEBI:15378"/>
        <dbReference type="ChEBI" id="CHEBI:136412"/>
        <dbReference type="ChEBI" id="CHEBI:157695"/>
        <dbReference type="ChEBI" id="CHEBI:167181"/>
        <dbReference type="EC" id="4.2.99.18"/>
    </reaction>
</comment>
<comment type="cofactor">
    <cofactor evidence="2">
        <name>Zn(2+)</name>
        <dbReference type="ChEBI" id="CHEBI:29105"/>
    </cofactor>
    <text evidence="2">Binds 1 zinc ion per subunit.</text>
</comment>
<comment type="subunit">
    <text evidence="2">Monomer.</text>
</comment>
<comment type="similarity">
    <text evidence="2">Belongs to the FPG family.</text>
</comment>
<keyword id="KW-0227">DNA damage</keyword>
<keyword id="KW-0234">DNA repair</keyword>
<keyword id="KW-0238">DNA-binding</keyword>
<keyword id="KW-0326">Glycosidase</keyword>
<keyword id="KW-0378">Hydrolase</keyword>
<keyword id="KW-0456">Lyase</keyword>
<keyword id="KW-0479">Metal-binding</keyword>
<keyword id="KW-0511">Multifunctional enzyme</keyword>
<keyword id="KW-0862">Zinc</keyword>
<keyword id="KW-0863">Zinc-finger</keyword>
<organism>
    <name type="scientific">Bacillus thuringiensis subsp. konkukian (strain 97-27)</name>
    <dbReference type="NCBI Taxonomy" id="281309"/>
    <lineage>
        <taxon>Bacteria</taxon>
        <taxon>Bacillati</taxon>
        <taxon>Bacillota</taxon>
        <taxon>Bacilli</taxon>
        <taxon>Bacillales</taxon>
        <taxon>Bacillaceae</taxon>
        <taxon>Bacillus</taxon>
        <taxon>Bacillus cereus group</taxon>
    </lineage>
</organism>
<reference key="1">
    <citation type="journal article" date="2006" name="J. Bacteriol.">
        <title>Pathogenomic sequence analysis of Bacillus cereus and Bacillus thuringiensis isolates closely related to Bacillus anthracis.</title>
        <authorList>
            <person name="Han C.S."/>
            <person name="Xie G."/>
            <person name="Challacombe J.F."/>
            <person name="Altherr M.R."/>
            <person name="Bhotika S.S."/>
            <person name="Bruce D."/>
            <person name="Campbell C.S."/>
            <person name="Campbell M.L."/>
            <person name="Chen J."/>
            <person name="Chertkov O."/>
            <person name="Cleland C."/>
            <person name="Dimitrijevic M."/>
            <person name="Doggett N.A."/>
            <person name="Fawcett J.J."/>
            <person name="Glavina T."/>
            <person name="Goodwin L.A."/>
            <person name="Hill K.K."/>
            <person name="Hitchcock P."/>
            <person name="Jackson P.J."/>
            <person name="Keim P."/>
            <person name="Kewalramani A.R."/>
            <person name="Longmire J."/>
            <person name="Lucas S."/>
            <person name="Malfatti S."/>
            <person name="McMurry K."/>
            <person name="Meincke L.J."/>
            <person name="Misra M."/>
            <person name="Moseman B.L."/>
            <person name="Mundt M."/>
            <person name="Munk A.C."/>
            <person name="Okinaka R.T."/>
            <person name="Parson-Quintana B."/>
            <person name="Reilly L.P."/>
            <person name="Richardson P."/>
            <person name="Robinson D.L."/>
            <person name="Rubin E."/>
            <person name="Saunders E."/>
            <person name="Tapia R."/>
            <person name="Tesmer J.G."/>
            <person name="Thayer N."/>
            <person name="Thompson L.S."/>
            <person name="Tice H."/>
            <person name="Ticknor L.O."/>
            <person name="Wills P.L."/>
            <person name="Brettin T.S."/>
            <person name="Gilna P."/>
        </authorList>
    </citation>
    <scope>NUCLEOTIDE SEQUENCE [LARGE SCALE GENOMIC DNA]</scope>
    <source>
        <strain>97-27</strain>
    </source>
</reference>
<sequence length="276" mass="31654">MPELPEVENVRRTLENLVTGKTIEDVIVTYPKIVKRPDDAEIFKEMLKGETIENIKRRGKFLLLYVTNYVIVSHLRMEGKFLLHQEDEPIDKHTHVRFLFTDGTELHYKDVRKFGTMHLFKKGEEMNQMPLADLGPEPFDAELTPQYLHERLQKTNRKIKVVLLDQRLLVGLGNIYVDEVLFRSQIHPEREASSLTAEEIERIYEATVTTLGEAVKRGGSTIRTYINSQGQIGSFQELLNVYGKKGEPCVTCGTILEKTVVGGRGTHYCPICQPRI</sequence>
<name>FPG_BACHK</name>